<feature type="chain" id="PRO_0000170043" description="LexA repressor">
    <location>
        <begin position="1"/>
        <end position="207"/>
    </location>
</feature>
<feature type="DNA-binding region" description="H-T-H motif" evidence="1">
    <location>
        <begin position="28"/>
        <end position="48"/>
    </location>
</feature>
<feature type="active site" description="For autocatalytic cleavage activity" evidence="1">
    <location>
        <position position="123"/>
    </location>
</feature>
<feature type="active site" description="For autocatalytic cleavage activity" evidence="1">
    <location>
        <position position="160"/>
    </location>
</feature>
<feature type="site" description="Cleavage; by autolysis" evidence="1">
    <location>
        <begin position="88"/>
        <end position="89"/>
    </location>
</feature>
<comment type="function">
    <text evidence="1">Represses a number of genes involved in the response to DNA damage (SOS response), including recA and lexA. In the presence of single-stranded DNA, RecA interacts with LexA causing an autocatalytic cleavage which disrupts the DNA-binding part of LexA, leading to derepression of the SOS regulon and eventually DNA repair.</text>
</comment>
<comment type="catalytic activity">
    <reaction evidence="1">
        <text>Hydrolysis of Ala-|-Gly bond in repressor LexA.</text>
        <dbReference type="EC" id="3.4.21.88"/>
    </reaction>
</comment>
<comment type="subunit">
    <text evidence="1">Homodimer.</text>
</comment>
<comment type="similarity">
    <text evidence="1">Belongs to the peptidase S24 family.</text>
</comment>
<comment type="sequence caution" evidence="2">
    <conflict type="erroneous initiation">
        <sequence resource="EMBL-CDS" id="AAX87798"/>
    </conflict>
</comment>
<name>LEXA_HAEI8</name>
<dbReference type="EC" id="3.4.21.88" evidence="1"/>
<dbReference type="EMBL" id="CP000057">
    <property type="protein sequence ID" value="AAX87798.1"/>
    <property type="status" value="ALT_INIT"/>
    <property type="molecule type" value="Genomic_DNA"/>
</dbReference>
<dbReference type="RefSeq" id="WP_005648504.1">
    <property type="nucleotide sequence ID" value="NC_007146.2"/>
</dbReference>
<dbReference type="SMR" id="Q4QME9"/>
<dbReference type="MEROPS" id="S24.001"/>
<dbReference type="GeneID" id="93219786"/>
<dbReference type="KEGG" id="hit:NTHI0905"/>
<dbReference type="HOGENOM" id="CLU_066192_45_3_6"/>
<dbReference type="Proteomes" id="UP000002525">
    <property type="component" value="Chromosome"/>
</dbReference>
<dbReference type="GO" id="GO:0003677">
    <property type="term" value="F:DNA binding"/>
    <property type="evidence" value="ECO:0007669"/>
    <property type="project" value="UniProtKB-UniRule"/>
</dbReference>
<dbReference type="GO" id="GO:0004252">
    <property type="term" value="F:serine-type endopeptidase activity"/>
    <property type="evidence" value="ECO:0007669"/>
    <property type="project" value="UniProtKB-UniRule"/>
</dbReference>
<dbReference type="GO" id="GO:0006281">
    <property type="term" value="P:DNA repair"/>
    <property type="evidence" value="ECO:0007669"/>
    <property type="project" value="UniProtKB-UniRule"/>
</dbReference>
<dbReference type="GO" id="GO:0006260">
    <property type="term" value="P:DNA replication"/>
    <property type="evidence" value="ECO:0007669"/>
    <property type="project" value="UniProtKB-UniRule"/>
</dbReference>
<dbReference type="GO" id="GO:0045892">
    <property type="term" value="P:negative regulation of DNA-templated transcription"/>
    <property type="evidence" value="ECO:0007669"/>
    <property type="project" value="UniProtKB-UniRule"/>
</dbReference>
<dbReference type="GO" id="GO:0006508">
    <property type="term" value="P:proteolysis"/>
    <property type="evidence" value="ECO:0007669"/>
    <property type="project" value="InterPro"/>
</dbReference>
<dbReference type="GO" id="GO:0009432">
    <property type="term" value="P:SOS response"/>
    <property type="evidence" value="ECO:0007669"/>
    <property type="project" value="UniProtKB-UniRule"/>
</dbReference>
<dbReference type="CDD" id="cd06529">
    <property type="entry name" value="S24_LexA-like"/>
    <property type="match status" value="1"/>
</dbReference>
<dbReference type="FunFam" id="1.10.10.10:FF:000009">
    <property type="entry name" value="LexA repressor"/>
    <property type="match status" value="1"/>
</dbReference>
<dbReference type="FunFam" id="2.10.109.10:FF:000001">
    <property type="entry name" value="LexA repressor"/>
    <property type="match status" value="1"/>
</dbReference>
<dbReference type="Gene3D" id="2.10.109.10">
    <property type="entry name" value="Umud Fragment, subunit A"/>
    <property type="match status" value="1"/>
</dbReference>
<dbReference type="Gene3D" id="1.10.10.10">
    <property type="entry name" value="Winged helix-like DNA-binding domain superfamily/Winged helix DNA-binding domain"/>
    <property type="match status" value="1"/>
</dbReference>
<dbReference type="HAMAP" id="MF_00015">
    <property type="entry name" value="LexA"/>
    <property type="match status" value="1"/>
</dbReference>
<dbReference type="InterPro" id="IPR006200">
    <property type="entry name" value="LexA"/>
</dbReference>
<dbReference type="InterPro" id="IPR039418">
    <property type="entry name" value="LexA-like"/>
</dbReference>
<dbReference type="InterPro" id="IPR036286">
    <property type="entry name" value="LexA/Signal_pep-like_sf"/>
</dbReference>
<dbReference type="InterPro" id="IPR006199">
    <property type="entry name" value="LexA_DNA-bd_dom"/>
</dbReference>
<dbReference type="InterPro" id="IPR050077">
    <property type="entry name" value="LexA_repressor"/>
</dbReference>
<dbReference type="InterPro" id="IPR006197">
    <property type="entry name" value="Peptidase_S24_LexA"/>
</dbReference>
<dbReference type="InterPro" id="IPR015927">
    <property type="entry name" value="Peptidase_S24_S26A/B/C"/>
</dbReference>
<dbReference type="InterPro" id="IPR036388">
    <property type="entry name" value="WH-like_DNA-bd_sf"/>
</dbReference>
<dbReference type="InterPro" id="IPR036390">
    <property type="entry name" value="WH_DNA-bd_sf"/>
</dbReference>
<dbReference type="NCBIfam" id="TIGR00498">
    <property type="entry name" value="lexA"/>
    <property type="match status" value="1"/>
</dbReference>
<dbReference type="PANTHER" id="PTHR33516">
    <property type="entry name" value="LEXA REPRESSOR"/>
    <property type="match status" value="1"/>
</dbReference>
<dbReference type="PANTHER" id="PTHR33516:SF2">
    <property type="entry name" value="LEXA REPRESSOR-RELATED"/>
    <property type="match status" value="1"/>
</dbReference>
<dbReference type="Pfam" id="PF01726">
    <property type="entry name" value="LexA_DNA_bind"/>
    <property type="match status" value="1"/>
</dbReference>
<dbReference type="Pfam" id="PF00717">
    <property type="entry name" value="Peptidase_S24"/>
    <property type="match status" value="1"/>
</dbReference>
<dbReference type="PRINTS" id="PR00726">
    <property type="entry name" value="LEXASERPTASE"/>
</dbReference>
<dbReference type="SUPFAM" id="SSF51306">
    <property type="entry name" value="LexA/Signal peptidase"/>
    <property type="match status" value="1"/>
</dbReference>
<dbReference type="SUPFAM" id="SSF46785">
    <property type="entry name" value="Winged helix' DNA-binding domain"/>
    <property type="match status" value="1"/>
</dbReference>
<reference key="1">
    <citation type="journal article" date="2005" name="J. Bacteriol.">
        <title>Genomic sequence of an otitis media isolate of nontypeable Haemophilus influenzae: comparative study with H. influenzae serotype d, strain KW20.</title>
        <authorList>
            <person name="Harrison A."/>
            <person name="Dyer D.W."/>
            <person name="Gillaspy A."/>
            <person name="Ray W.C."/>
            <person name="Mungur R."/>
            <person name="Carson M.B."/>
            <person name="Zhong H."/>
            <person name="Gipson J."/>
            <person name="Gipson M."/>
            <person name="Johnson L.S."/>
            <person name="Lewis L."/>
            <person name="Bakaletz L.O."/>
            <person name="Munson R.S. Jr."/>
        </authorList>
    </citation>
    <scope>NUCLEOTIDE SEQUENCE [LARGE SCALE GENOMIC DNA]</scope>
    <source>
        <strain>86-028NP</strain>
    </source>
</reference>
<accession>Q4QME9</accession>
<evidence type="ECO:0000255" key="1">
    <source>
        <dbReference type="HAMAP-Rule" id="MF_00015"/>
    </source>
</evidence>
<evidence type="ECO:0000305" key="2"/>
<organism>
    <name type="scientific">Haemophilus influenzae (strain 86-028NP)</name>
    <dbReference type="NCBI Taxonomy" id="281310"/>
    <lineage>
        <taxon>Bacteria</taxon>
        <taxon>Pseudomonadati</taxon>
        <taxon>Pseudomonadota</taxon>
        <taxon>Gammaproteobacteria</taxon>
        <taxon>Pasteurellales</taxon>
        <taxon>Pasteurellaceae</taxon>
        <taxon>Haemophilus</taxon>
    </lineage>
</organism>
<sequence>MRPLTARQQEVLDLLKRHLETTGMPPTRAEISRELGFKSANAAEEHLKALSRKGAIEIIPGASRGIRILDNSSNDEFDGLPLVGRVAAGEPILAEQHIEATYRVDADMFKPQADFLLKVYGLSMKNVGILDGDLLAVHSTKDVRNGQIVVARIEDEVTVKRLEKKGSIIYLHAENEEFDPIVVNLEEQKNFEIEGIAVGIIRNNAWM</sequence>
<keyword id="KW-0068">Autocatalytic cleavage</keyword>
<keyword id="KW-0227">DNA damage</keyword>
<keyword id="KW-0234">DNA repair</keyword>
<keyword id="KW-0235">DNA replication</keyword>
<keyword id="KW-0238">DNA-binding</keyword>
<keyword id="KW-0378">Hydrolase</keyword>
<keyword id="KW-0678">Repressor</keyword>
<keyword id="KW-0742">SOS response</keyword>
<keyword id="KW-0804">Transcription</keyword>
<keyword id="KW-0805">Transcription regulation</keyword>
<gene>
    <name evidence="1" type="primary">lexA</name>
    <name type="ordered locus">NTHI0905</name>
</gene>
<proteinExistence type="inferred from homology"/>
<protein>
    <recommendedName>
        <fullName evidence="1">LexA repressor</fullName>
        <ecNumber evidence="1">3.4.21.88</ecNumber>
    </recommendedName>
</protein>